<dbReference type="EMBL" id="AF133240">
    <property type="protein sequence ID" value="AAF14367.1"/>
    <property type="molecule type" value="Genomic_DNA"/>
</dbReference>
<dbReference type="SMR" id="Q8VLR6"/>
<dbReference type="GO" id="GO:0030694">
    <property type="term" value="C:bacterial-type flagellum basal body, rod"/>
    <property type="evidence" value="ECO:0007669"/>
    <property type="project" value="InterPro"/>
</dbReference>
<dbReference type="GO" id="GO:0071978">
    <property type="term" value="P:bacterial-type flagellum-dependent swarming motility"/>
    <property type="evidence" value="ECO:0007669"/>
    <property type="project" value="TreeGrafter"/>
</dbReference>
<dbReference type="InterPro" id="IPR019776">
    <property type="entry name" value="Flagellar_basal_body_rod_CS"/>
</dbReference>
<dbReference type="InterPro" id="IPR006300">
    <property type="entry name" value="FlgB"/>
</dbReference>
<dbReference type="NCBIfam" id="TIGR01396">
    <property type="entry name" value="FlgB"/>
    <property type="match status" value="1"/>
</dbReference>
<dbReference type="PANTHER" id="PTHR30435:SF12">
    <property type="entry name" value="FLAGELLAR BASAL BODY ROD PROTEIN FLGB"/>
    <property type="match status" value="1"/>
</dbReference>
<dbReference type="PANTHER" id="PTHR30435">
    <property type="entry name" value="FLAGELLAR PROTEIN"/>
    <property type="match status" value="1"/>
</dbReference>
<dbReference type="PIRSF" id="PIRSF002889">
    <property type="entry name" value="Rod_FlgB"/>
    <property type="match status" value="1"/>
</dbReference>
<dbReference type="PROSITE" id="PS00588">
    <property type="entry name" value="FLAGELLA_BB_ROD"/>
    <property type="match status" value="1"/>
</dbReference>
<feature type="chain" id="PRO_0000415705" description="Flagellar basal body rod protein FlgB">
    <location>
        <begin position="1"/>
        <end position="128"/>
    </location>
</feature>
<comment type="function">
    <text evidence="1">Structural component of flagellum, the bacterial motility apparatus. Part of the rod structure of flagellar basal body (By similarity).</text>
</comment>
<comment type="subunit">
    <text evidence="1">The basal body constitutes a major portion of the flagellar organelle and consists of a number of rings mounted on a central rod. In Gram-negative bacteria, at least four rings, L, P, S and M are present, whereas Gram-positive bacteria lack the L and P rings. The rod consists of about 26 subunits of FlgG in the distal portion, and FlgB, FlgC and FlgF build up the proximal portion of the rod with about 6 subunits each. Rod assembly occurs by export via the flagellum-specific pathway of its constituent proteins and by their incorporation into the rod structure in the probable order of FlgB, FlgC, FlgF and FlgG. Another protein, FliE, also assembles onto the stable rod structure (By similarity).</text>
</comment>
<comment type="subcellular location">
    <subcellularLocation>
        <location evidence="1">Bacterial flagellum basal body</location>
    </subcellularLocation>
</comment>
<comment type="similarity">
    <text evidence="2">Belongs to the flagella basal body rod proteins family.</text>
</comment>
<sequence>MTGFRDQLGVHAQALVLRETRNNLLTSNIANAATPHYKARDIDFGAELARASGNGTVRTTEARHFAAGGPAARGEALYRDPVSPSLDGNTVEMAVEQMEFAENTLRYQTSLALLNRRISGLMTAIKGE</sequence>
<accession>Q8VLR6</accession>
<keyword id="KW-0975">Bacterial flagellum</keyword>
<proteinExistence type="inferred from homology"/>
<evidence type="ECO:0000250" key="1">
    <source>
        <dbReference type="UniProtKB" id="P16437"/>
    </source>
</evidence>
<evidence type="ECO:0000255" key="2"/>
<evidence type="ECO:0000312" key="3">
    <source>
        <dbReference type="EMBL" id="AAF14367.1"/>
    </source>
</evidence>
<protein>
    <recommendedName>
        <fullName evidence="1 3">Flagellar basal body rod protein FlgB</fullName>
    </recommendedName>
</protein>
<organism>
    <name type="scientific">Cereibacter sphaeroides</name>
    <name type="common">Rhodobacter sphaeroides</name>
    <dbReference type="NCBI Taxonomy" id="1063"/>
    <lineage>
        <taxon>Bacteria</taxon>
        <taxon>Pseudomonadati</taxon>
        <taxon>Pseudomonadota</taxon>
        <taxon>Alphaproteobacteria</taxon>
        <taxon>Rhodobacterales</taxon>
        <taxon>Paracoccaceae</taxon>
        <taxon>Cereibacter</taxon>
    </lineage>
</organism>
<reference evidence="3" key="1">
    <citation type="journal article" date="2001" name="J. Bacteriol.">
        <title>The hook gene (flgE) is expressed from the flgBCDEF operon in Rhodobacter sphaeroides: study of an flgE mutant.</title>
        <authorList>
            <person name="Ballado T."/>
            <person name="Camarena L."/>
            <person name="Gonzalez-Pedrajo B."/>
            <person name="Silva-Herzog E."/>
            <person name="Dreyfus G."/>
        </authorList>
    </citation>
    <scope>NUCLEOTIDE SEQUENCE [GENOMIC DNA]</scope>
    <source>
        <strain evidence="3">WS8</strain>
    </source>
</reference>
<name>FLGB_CERSP</name>
<gene>
    <name evidence="3" type="primary">flgB</name>
</gene>